<comment type="function">
    <text evidence="5">Substrate-specific adapter of a BCR (BTB-CUL3-RBX1) E3 ubiquitin ligase complex that acts as a regulator of the insulin signaling pathway, modulating insulin sensitivity by limiting PIK3R1/p85alpha abundance in adipocytes. Targets PIK3R1, the regulatory subunit of phosphatidylinositol 3-kinase (PI3K), for 'Lys-48'-linked polyubiquitination and proteasome-mediated degradation.</text>
</comment>
<comment type="pathway">
    <text evidence="5">Protein modification; protein ubiquitination.</text>
</comment>
<comment type="subunit">
    <text evidence="1 5">Component of the BCR(KBTBD2) E3 ubiquitin ligase complex, at least composed of CUL3, KBTBD2 and RBX1 (PubMed:27708159). Interacts (via the BTB domain) with CUL3 (By similarity).</text>
</comment>
<comment type="domain">
    <text evidence="1">Recognizes the BCR (BTB-CUL3-RBX1) E3 ubiquitin ligase complex substrate, PIK3R1, through the 4 tandem C-terminal Kelch domains.</text>
</comment>
<comment type="sequence caution" evidence="6">
    <conflict type="frameshift">
        <sequence resource="EMBL-CDS" id="AAD34068"/>
    </conflict>
</comment>
<protein>
    <recommendedName>
        <fullName evidence="6">Kelch repeat and BTB domain-containing protein 2</fullName>
    </recommendedName>
    <alternativeName>
        <fullName>BTB and kelch domain-containing protein 1</fullName>
    </alternativeName>
</protein>
<reference key="1">
    <citation type="journal article" date="2004" name="Nat. Genet.">
        <title>Complete sequencing and characterization of 21,243 full-length human cDNAs.</title>
        <authorList>
            <person name="Ota T."/>
            <person name="Suzuki Y."/>
            <person name="Nishikawa T."/>
            <person name="Otsuki T."/>
            <person name="Sugiyama T."/>
            <person name="Irie R."/>
            <person name="Wakamatsu A."/>
            <person name="Hayashi K."/>
            <person name="Sato H."/>
            <person name="Nagai K."/>
            <person name="Kimura K."/>
            <person name="Makita H."/>
            <person name="Sekine M."/>
            <person name="Obayashi M."/>
            <person name="Nishi T."/>
            <person name="Shibahara T."/>
            <person name="Tanaka T."/>
            <person name="Ishii S."/>
            <person name="Yamamoto J."/>
            <person name="Saito K."/>
            <person name="Kawai Y."/>
            <person name="Isono Y."/>
            <person name="Nakamura Y."/>
            <person name="Nagahari K."/>
            <person name="Murakami K."/>
            <person name="Yasuda T."/>
            <person name="Iwayanagi T."/>
            <person name="Wagatsuma M."/>
            <person name="Shiratori A."/>
            <person name="Sudo H."/>
            <person name="Hosoiri T."/>
            <person name="Kaku Y."/>
            <person name="Kodaira H."/>
            <person name="Kondo H."/>
            <person name="Sugawara M."/>
            <person name="Takahashi M."/>
            <person name="Kanda K."/>
            <person name="Yokoi T."/>
            <person name="Furuya T."/>
            <person name="Kikkawa E."/>
            <person name="Omura Y."/>
            <person name="Abe K."/>
            <person name="Kamihara K."/>
            <person name="Katsuta N."/>
            <person name="Sato K."/>
            <person name="Tanikawa M."/>
            <person name="Yamazaki M."/>
            <person name="Ninomiya K."/>
            <person name="Ishibashi T."/>
            <person name="Yamashita H."/>
            <person name="Murakawa K."/>
            <person name="Fujimori K."/>
            <person name="Tanai H."/>
            <person name="Kimata M."/>
            <person name="Watanabe M."/>
            <person name="Hiraoka S."/>
            <person name="Chiba Y."/>
            <person name="Ishida S."/>
            <person name="Ono Y."/>
            <person name="Takiguchi S."/>
            <person name="Watanabe S."/>
            <person name="Yosida M."/>
            <person name="Hotuta T."/>
            <person name="Kusano J."/>
            <person name="Kanehori K."/>
            <person name="Takahashi-Fujii A."/>
            <person name="Hara H."/>
            <person name="Tanase T.-O."/>
            <person name="Nomura Y."/>
            <person name="Togiya S."/>
            <person name="Komai F."/>
            <person name="Hara R."/>
            <person name="Takeuchi K."/>
            <person name="Arita M."/>
            <person name="Imose N."/>
            <person name="Musashino K."/>
            <person name="Yuuki H."/>
            <person name="Oshima A."/>
            <person name="Sasaki N."/>
            <person name="Aotsuka S."/>
            <person name="Yoshikawa Y."/>
            <person name="Matsunawa H."/>
            <person name="Ichihara T."/>
            <person name="Shiohata N."/>
            <person name="Sano S."/>
            <person name="Moriya S."/>
            <person name="Momiyama H."/>
            <person name="Satoh N."/>
            <person name="Takami S."/>
            <person name="Terashima Y."/>
            <person name="Suzuki O."/>
            <person name="Nakagawa S."/>
            <person name="Senoh A."/>
            <person name="Mizoguchi H."/>
            <person name="Goto Y."/>
            <person name="Shimizu F."/>
            <person name="Wakebe H."/>
            <person name="Hishigaki H."/>
            <person name="Watanabe T."/>
            <person name="Sugiyama A."/>
            <person name="Takemoto M."/>
            <person name="Kawakami B."/>
            <person name="Yamazaki M."/>
            <person name="Watanabe K."/>
            <person name="Kumagai A."/>
            <person name="Itakura S."/>
            <person name="Fukuzumi Y."/>
            <person name="Fujimori Y."/>
            <person name="Komiyama M."/>
            <person name="Tashiro H."/>
            <person name="Tanigami A."/>
            <person name="Fujiwara T."/>
            <person name="Ono T."/>
            <person name="Yamada K."/>
            <person name="Fujii Y."/>
            <person name="Ozaki K."/>
            <person name="Hirao M."/>
            <person name="Ohmori Y."/>
            <person name="Kawabata A."/>
            <person name="Hikiji T."/>
            <person name="Kobatake N."/>
            <person name="Inagaki H."/>
            <person name="Ikema Y."/>
            <person name="Okamoto S."/>
            <person name="Okitani R."/>
            <person name="Kawakami T."/>
            <person name="Noguchi S."/>
            <person name="Itoh T."/>
            <person name="Shigeta K."/>
            <person name="Senba T."/>
            <person name="Matsumura K."/>
            <person name="Nakajima Y."/>
            <person name="Mizuno T."/>
            <person name="Morinaga M."/>
            <person name="Sasaki M."/>
            <person name="Togashi T."/>
            <person name="Oyama M."/>
            <person name="Hata H."/>
            <person name="Watanabe M."/>
            <person name="Komatsu T."/>
            <person name="Mizushima-Sugano J."/>
            <person name="Satoh T."/>
            <person name="Shirai Y."/>
            <person name="Takahashi Y."/>
            <person name="Nakagawa K."/>
            <person name="Okumura K."/>
            <person name="Nagase T."/>
            <person name="Nomura N."/>
            <person name="Kikuchi H."/>
            <person name="Masuho Y."/>
            <person name="Yamashita R."/>
            <person name="Nakai K."/>
            <person name="Yada T."/>
            <person name="Nakamura Y."/>
            <person name="Ohara O."/>
            <person name="Isogai T."/>
            <person name="Sugano S."/>
        </authorList>
    </citation>
    <scope>NUCLEOTIDE SEQUENCE [LARGE SCALE MRNA]</scope>
    <source>
        <tissue>Trachea</tissue>
    </source>
</reference>
<reference key="2">
    <citation type="submission" date="2005-07" db="EMBL/GenBank/DDBJ databases">
        <authorList>
            <person name="Mural R.J."/>
            <person name="Istrail S."/>
            <person name="Sutton G.G."/>
            <person name="Florea L."/>
            <person name="Halpern A.L."/>
            <person name="Mobarry C.M."/>
            <person name="Lippert R."/>
            <person name="Walenz B."/>
            <person name="Shatkay H."/>
            <person name="Dew I."/>
            <person name="Miller J.R."/>
            <person name="Flanigan M.J."/>
            <person name="Edwards N.J."/>
            <person name="Bolanos R."/>
            <person name="Fasulo D."/>
            <person name="Halldorsson B.V."/>
            <person name="Hannenhalli S."/>
            <person name="Turner R."/>
            <person name="Yooseph S."/>
            <person name="Lu F."/>
            <person name="Nusskern D.R."/>
            <person name="Shue B.C."/>
            <person name="Zheng X.H."/>
            <person name="Zhong F."/>
            <person name="Delcher A.L."/>
            <person name="Huson D.H."/>
            <person name="Kravitz S.A."/>
            <person name="Mouchard L."/>
            <person name="Reinert K."/>
            <person name="Remington K.A."/>
            <person name="Clark A.G."/>
            <person name="Waterman M.S."/>
            <person name="Eichler E.E."/>
            <person name="Adams M.D."/>
            <person name="Hunkapiller M.W."/>
            <person name="Myers E.W."/>
            <person name="Venter J.C."/>
        </authorList>
    </citation>
    <scope>NUCLEOTIDE SEQUENCE [LARGE SCALE GENOMIC DNA]</scope>
</reference>
<reference key="3">
    <citation type="journal article" date="2004" name="Genome Res.">
        <title>The status, quality, and expansion of the NIH full-length cDNA project: the Mammalian Gene Collection (MGC).</title>
        <authorList>
            <consortium name="The MGC Project Team"/>
        </authorList>
    </citation>
    <scope>NUCLEOTIDE SEQUENCE [LARGE SCALE MRNA]</scope>
    <scope>VARIANTS LYS-166; GLY-189; ARG-254; ARG-301; ILE-534 AND TYR-594</scope>
    <source>
        <tissue>Brain</tissue>
    </source>
</reference>
<reference key="4">
    <citation type="journal article" date="2000" name="Genome Res.">
        <title>Identification of novel human genes evolutionarily conserved in Caenorhabditis elegans by comparative proteomics.</title>
        <authorList>
            <person name="Lai C.-H."/>
            <person name="Chou C.-Y."/>
            <person name="Ch'ang L.-Y."/>
            <person name="Liu C.-S."/>
            <person name="Lin W.-C."/>
        </authorList>
    </citation>
    <scope>NUCLEOTIDE SEQUENCE [LARGE SCALE MRNA] OF 1-376</scope>
</reference>
<reference key="5">
    <citation type="journal article" date="2000" name="DNA Res.">
        <title>Prediction of the coding sequences of unidentified human genes. XVII. The complete sequences of 100 new cDNA clones from brain which code for large proteins in vitro.</title>
        <authorList>
            <person name="Nagase T."/>
            <person name="Kikuno R."/>
            <person name="Ishikawa K."/>
            <person name="Hirosawa M."/>
            <person name="Ohara O."/>
        </authorList>
    </citation>
    <scope>NUCLEOTIDE SEQUENCE [LARGE SCALE MRNA] OF 113-623</scope>
    <source>
        <tissue>Brain</tissue>
    </source>
</reference>
<reference key="6">
    <citation type="journal article" date="2007" name="BMC Genomics">
        <title>The full-ORF clone resource of the German cDNA consortium.</title>
        <authorList>
            <person name="Bechtel S."/>
            <person name="Rosenfelder H."/>
            <person name="Duda A."/>
            <person name="Schmidt C.P."/>
            <person name="Ernst U."/>
            <person name="Wellenreuther R."/>
            <person name="Mehrle A."/>
            <person name="Schuster C."/>
            <person name="Bahr A."/>
            <person name="Bloecker H."/>
            <person name="Heubner D."/>
            <person name="Hoerlein A."/>
            <person name="Michel G."/>
            <person name="Wedler H."/>
            <person name="Koehrer K."/>
            <person name="Ottenwaelder B."/>
            <person name="Poustka A."/>
            <person name="Wiemann S."/>
            <person name="Schupp I."/>
        </authorList>
    </citation>
    <scope>NUCLEOTIDE SEQUENCE [LARGE SCALE MRNA] OF 276-623</scope>
    <source>
        <tissue>Kidney</tissue>
    </source>
</reference>
<reference key="7">
    <citation type="journal article" date="2009" name="Sci. Signal.">
        <title>Quantitative phosphoproteomic analysis of T cell receptor signaling reveals system-wide modulation of protein-protein interactions.</title>
        <authorList>
            <person name="Mayya V."/>
            <person name="Lundgren D.H."/>
            <person name="Hwang S.-I."/>
            <person name="Rezaul K."/>
            <person name="Wu L."/>
            <person name="Eng J.K."/>
            <person name="Rodionov V."/>
            <person name="Han D.K."/>
        </authorList>
    </citation>
    <scope>PHOSPHORYLATION [LARGE SCALE ANALYSIS] AT SER-300</scope>
    <scope>IDENTIFICATION BY MASS SPECTROMETRY [LARGE SCALE ANALYSIS]</scope>
    <source>
        <tissue>Leukemic T-cell</tissue>
    </source>
</reference>
<reference key="8">
    <citation type="journal article" date="2016" name="Proc. Natl. Acad. Sci. U.S.A.">
        <title>Insulin resistance and diabetes caused by genetic or diet-induced KBTBD2 deficiency in mice.</title>
        <authorList>
            <person name="Zhang Z."/>
            <person name="Turer E."/>
            <person name="Li X."/>
            <person name="Zhan X."/>
            <person name="Choi M."/>
            <person name="Tang M."/>
            <person name="Press A."/>
            <person name="Smith S.R."/>
            <person name="Divoux A."/>
            <person name="Moresco E.M."/>
            <person name="Beutler B."/>
        </authorList>
    </citation>
    <scope>FUNCTION</scope>
    <scope>IDENTIFICATION IN BCR(KBTBD2) E3 UBIQUITIN LIGASE COMPLEX</scope>
</reference>
<gene>
    <name evidence="7" type="primary">KBTBD2</name>
    <name type="synonym">BKLHD1</name>
    <name type="synonym">KIAA1489</name>
    <name type="ORF">CGI-73</name>
</gene>
<accession>Q8IY47</accession>
<accession>A8K9T7</accession>
<accession>Q86Y62</accession>
<accession>Q9P239</accession>
<accession>Q9UFM7</accession>
<accession>Q9Y382</accession>
<proteinExistence type="evidence at protein level"/>
<feature type="chain" id="PRO_0000119077" description="Kelch repeat and BTB domain-containing protein 2">
    <location>
        <begin position="1"/>
        <end position="623"/>
    </location>
</feature>
<feature type="domain" description="BTB" evidence="3">
    <location>
        <begin position="31"/>
        <end position="98"/>
    </location>
</feature>
<feature type="domain" description="BACK" evidence="2">
    <location>
        <begin position="133"/>
        <end position="229"/>
    </location>
</feature>
<feature type="repeat" description="Kelch 1" evidence="2">
    <location>
        <begin position="317"/>
        <end position="380"/>
    </location>
</feature>
<feature type="repeat" description="Kelch 2" evidence="2">
    <location>
        <begin position="381"/>
        <end position="429"/>
    </location>
</feature>
<feature type="repeat" description="Kelch 3" evidence="2">
    <location>
        <begin position="431"/>
        <end position="469"/>
    </location>
</feature>
<feature type="repeat" description="Kelch 4" evidence="2">
    <location>
        <begin position="470"/>
        <end position="529"/>
    </location>
</feature>
<feature type="repeat" description="Kelch 5" evidence="2">
    <location>
        <begin position="535"/>
        <end position="581"/>
    </location>
</feature>
<feature type="modified residue" description="Phosphoserine" evidence="8">
    <location>
        <position position="300"/>
    </location>
</feature>
<feature type="sequence variant" id="VAR_037766" description="In dbSNP:rs17853781." evidence="4">
    <original>Q</original>
    <variation>K</variation>
    <location>
        <position position="166"/>
    </location>
</feature>
<feature type="sequence variant" id="VAR_037767" description="In dbSNP:rs17854425." evidence="4">
    <original>E</original>
    <variation>G</variation>
    <location>
        <position position="189"/>
    </location>
</feature>
<feature type="sequence variant" id="VAR_037768" description="In dbSNP:rs35477666.">
    <original>T</original>
    <variation>P</variation>
    <location>
        <position position="193"/>
    </location>
</feature>
<feature type="sequence variant" id="VAR_037769" description="In dbSNP:rs17857323." evidence="4">
    <original>P</original>
    <variation>R</variation>
    <location>
        <position position="254"/>
    </location>
</feature>
<feature type="sequence variant" id="VAR_037770" description="In dbSNP:rs17857324." evidence="4">
    <original>P</original>
    <variation>R</variation>
    <location>
        <position position="301"/>
    </location>
</feature>
<feature type="sequence variant" id="VAR_037771" description="In dbSNP:rs17854424." evidence="4">
    <original>L</original>
    <variation>I</variation>
    <location>
        <position position="534"/>
    </location>
</feature>
<feature type="sequence variant" id="VAR_037772" description="In dbSNP:rs17853783." evidence="4">
    <original>S</original>
    <variation>Y</variation>
    <location>
        <position position="594"/>
    </location>
</feature>
<feature type="sequence conflict" description="In Ref. 4; AAD34068." evidence="6" ref="4">
    <original>D</original>
    <variation>V</variation>
    <location>
        <position position="167"/>
    </location>
</feature>
<feature type="sequence conflict" description="In Ref. 4; AAD34068." evidence="6" ref="4">
    <original>L</original>
    <variation>F</variation>
    <location>
        <position position="181"/>
    </location>
</feature>
<feature type="sequence conflict" description="In Ref. 6; CAB55994." evidence="6" ref="6">
    <original>S</original>
    <variation>A</variation>
    <location>
        <position position="276"/>
    </location>
</feature>
<feature type="sequence conflict" description="In Ref. 6; CAB55994." evidence="6" ref="6">
    <original>L</original>
    <variation>S</variation>
    <location>
        <position position="543"/>
    </location>
</feature>
<keyword id="KW-0002">3D-structure</keyword>
<keyword id="KW-0880">Kelch repeat</keyword>
<keyword id="KW-0597">Phosphoprotein</keyword>
<keyword id="KW-1267">Proteomics identification</keyword>
<keyword id="KW-1185">Reference proteome</keyword>
<keyword id="KW-0677">Repeat</keyword>
<keyword id="KW-0833">Ubl conjugation pathway</keyword>
<organism>
    <name type="scientific">Homo sapiens</name>
    <name type="common">Human</name>
    <dbReference type="NCBI Taxonomy" id="9606"/>
    <lineage>
        <taxon>Eukaryota</taxon>
        <taxon>Metazoa</taxon>
        <taxon>Chordata</taxon>
        <taxon>Craniata</taxon>
        <taxon>Vertebrata</taxon>
        <taxon>Euteleostomi</taxon>
        <taxon>Mammalia</taxon>
        <taxon>Eutheria</taxon>
        <taxon>Euarchontoglires</taxon>
        <taxon>Primates</taxon>
        <taxon>Haplorrhini</taxon>
        <taxon>Catarrhini</taxon>
        <taxon>Hominidae</taxon>
        <taxon>Homo</taxon>
    </lineage>
</organism>
<dbReference type="EMBL" id="AK292802">
    <property type="protein sequence ID" value="BAF85491.1"/>
    <property type="molecule type" value="mRNA"/>
</dbReference>
<dbReference type="EMBL" id="CH471073">
    <property type="protein sequence ID" value="EAW94000.1"/>
    <property type="molecule type" value="Genomic_DNA"/>
</dbReference>
<dbReference type="EMBL" id="BC037887">
    <property type="protein sequence ID" value="AAH37887.1"/>
    <property type="molecule type" value="mRNA"/>
</dbReference>
<dbReference type="EMBL" id="BC047107">
    <property type="protein sequence ID" value="AAH47107.1"/>
    <property type="molecule type" value="mRNA"/>
</dbReference>
<dbReference type="EMBL" id="AF151831">
    <property type="protein sequence ID" value="AAD34068.1"/>
    <property type="status" value="ALT_FRAME"/>
    <property type="molecule type" value="mRNA"/>
</dbReference>
<dbReference type="EMBL" id="AB040922">
    <property type="protein sequence ID" value="BAA96013.1"/>
    <property type="molecule type" value="mRNA"/>
</dbReference>
<dbReference type="EMBL" id="AL117562">
    <property type="protein sequence ID" value="CAB55994.1"/>
    <property type="molecule type" value="mRNA"/>
</dbReference>
<dbReference type="CCDS" id="CCDS34614.1"/>
<dbReference type="PIR" id="T17304">
    <property type="entry name" value="T17304"/>
</dbReference>
<dbReference type="RefSeq" id="NP_056298.2">
    <property type="nucleotide sequence ID" value="NM_015483.3"/>
</dbReference>
<dbReference type="RefSeq" id="XP_005249753.1">
    <property type="nucleotide sequence ID" value="XM_005249696.3"/>
</dbReference>
<dbReference type="RefSeq" id="XP_011513558.1">
    <property type="nucleotide sequence ID" value="XM_011515256.3"/>
</dbReference>
<dbReference type="RefSeq" id="XP_047276080.1">
    <property type="nucleotide sequence ID" value="XM_047420124.1"/>
</dbReference>
<dbReference type="RefSeq" id="XP_047276081.1">
    <property type="nucleotide sequence ID" value="XM_047420125.1"/>
</dbReference>
<dbReference type="RefSeq" id="XP_047276082.1">
    <property type="nucleotide sequence ID" value="XM_047420126.1"/>
</dbReference>
<dbReference type="RefSeq" id="XP_047276083.1">
    <property type="nucleotide sequence ID" value="XM_047420127.1"/>
</dbReference>
<dbReference type="RefSeq" id="XP_054213748.1">
    <property type="nucleotide sequence ID" value="XM_054357773.1"/>
</dbReference>
<dbReference type="RefSeq" id="XP_054213749.1">
    <property type="nucleotide sequence ID" value="XM_054357774.1"/>
</dbReference>
<dbReference type="RefSeq" id="XP_054213750.1">
    <property type="nucleotide sequence ID" value="XM_054357775.1"/>
</dbReference>
<dbReference type="RefSeq" id="XP_054213751.1">
    <property type="nucleotide sequence ID" value="XM_054357776.1"/>
</dbReference>
<dbReference type="RefSeq" id="XP_054213752.1">
    <property type="nucleotide sequence ID" value="XM_054357777.1"/>
</dbReference>
<dbReference type="RefSeq" id="XP_054213753.1">
    <property type="nucleotide sequence ID" value="XM_054357778.1"/>
</dbReference>
<dbReference type="PDB" id="8GQ6">
    <property type="method" value="EM"/>
    <property type="resolution" value="3.96 A"/>
    <property type="chains" value="A/B=1-623"/>
</dbReference>
<dbReference type="PDB" id="8H33">
    <property type="method" value="EM"/>
    <property type="resolution" value="7.86 A"/>
    <property type="chains" value="A/B/G/J=1-623"/>
</dbReference>
<dbReference type="PDB" id="8H34">
    <property type="method" value="EM"/>
    <property type="resolution" value="7.99 A"/>
    <property type="chains" value="A/B/G/J/N/P=1-623"/>
</dbReference>
<dbReference type="PDB" id="8H35">
    <property type="method" value="EM"/>
    <property type="resolution" value="7.41 A"/>
    <property type="chains" value="A/B/G/J/N/P/S/U=1-623"/>
</dbReference>
<dbReference type="PDB" id="8H36">
    <property type="method" value="EM"/>
    <property type="resolution" value="4.60 A"/>
    <property type="chains" value="A/B=1-623"/>
</dbReference>
<dbReference type="PDB" id="8H37">
    <property type="method" value="EM"/>
    <property type="resolution" value="7.52 A"/>
    <property type="chains" value="A/B/N/P=1-623"/>
</dbReference>
<dbReference type="PDB" id="8H38">
    <property type="method" value="EM"/>
    <property type="resolution" value="4.25 A"/>
    <property type="chains" value="I/M=1-623"/>
</dbReference>
<dbReference type="PDB" id="8H3A">
    <property type="method" value="EM"/>
    <property type="resolution" value="7.51 A"/>
    <property type="chains" value="I/M=1-623"/>
</dbReference>
<dbReference type="PDB" id="8H3F">
    <property type="method" value="EM"/>
    <property type="resolution" value="6.73 A"/>
    <property type="chains" value="I/M=1-623"/>
</dbReference>
<dbReference type="PDB" id="8H3R">
    <property type="method" value="EM"/>
    <property type="resolution" value="6.36 A"/>
    <property type="chains" value="A/B=1-623"/>
</dbReference>
<dbReference type="PDBsum" id="8GQ6"/>
<dbReference type="PDBsum" id="8H33"/>
<dbReference type="PDBsum" id="8H34"/>
<dbReference type="PDBsum" id="8H35"/>
<dbReference type="PDBsum" id="8H36"/>
<dbReference type="PDBsum" id="8H37"/>
<dbReference type="PDBsum" id="8H38"/>
<dbReference type="PDBsum" id="8H3A"/>
<dbReference type="PDBsum" id="8H3F"/>
<dbReference type="PDBsum" id="8H3R"/>
<dbReference type="EMDB" id="EMD-34199"/>
<dbReference type="EMDB" id="EMD-34449"/>
<dbReference type="EMDB" id="EMD-34450"/>
<dbReference type="EMDB" id="EMD-34451"/>
<dbReference type="EMDB" id="EMD-34452"/>
<dbReference type="EMDB" id="EMD-34453"/>
<dbReference type="EMDB" id="EMD-34455"/>
<dbReference type="EMDB" id="EMD-34462"/>
<dbReference type="EMDB" id="EMD-34467"/>
<dbReference type="EMDB" id="EMD-34474"/>
<dbReference type="SMR" id="Q8IY47"/>
<dbReference type="BioGRID" id="117443">
    <property type="interactions" value="13"/>
</dbReference>
<dbReference type="ComplexPortal" id="CPX-8918">
    <property type="entry name" value="CRL3 E3 ubiquitin ligase complex, KBTBD2 variant"/>
</dbReference>
<dbReference type="FunCoup" id="Q8IY47">
    <property type="interactions" value="2244"/>
</dbReference>
<dbReference type="IntAct" id="Q8IY47">
    <property type="interactions" value="5"/>
</dbReference>
<dbReference type="MINT" id="Q8IY47"/>
<dbReference type="STRING" id="9606.ENSP00000302586"/>
<dbReference type="GlyGen" id="Q8IY47">
    <property type="glycosylation" value="2 sites, 1 O-linked glycan (2 sites)"/>
</dbReference>
<dbReference type="iPTMnet" id="Q8IY47"/>
<dbReference type="PhosphoSitePlus" id="Q8IY47"/>
<dbReference type="BioMuta" id="KBTBD2"/>
<dbReference type="DMDM" id="33301029"/>
<dbReference type="jPOST" id="Q8IY47"/>
<dbReference type="MassIVE" id="Q8IY47"/>
<dbReference type="PaxDb" id="9606-ENSP00000302586"/>
<dbReference type="PeptideAtlas" id="Q8IY47"/>
<dbReference type="ProteomicsDB" id="71106"/>
<dbReference type="Pumba" id="Q8IY47"/>
<dbReference type="Antibodypedia" id="12767">
    <property type="antibodies" value="75 antibodies from 19 providers"/>
</dbReference>
<dbReference type="DNASU" id="25948"/>
<dbReference type="Ensembl" id="ENST00000304056.9">
    <property type="protein sequence ID" value="ENSP00000302586.4"/>
    <property type="gene ID" value="ENSG00000170852.12"/>
</dbReference>
<dbReference type="GeneID" id="25948"/>
<dbReference type="KEGG" id="hsa:25948"/>
<dbReference type="MANE-Select" id="ENST00000304056.9">
    <property type="protein sequence ID" value="ENSP00000302586.4"/>
    <property type="RefSeq nucleotide sequence ID" value="NM_015483.3"/>
    <property type="RefSeq protein sequence ID" value="NP_056298.2"/>
</dbReference>
<dbReference type="UCSC" id="uc003tdb.3">
    <property type="organism name" value="human"/>
</dbReference>
<dbReference type="AGR" id="HGNC:21751"/>
<dbReference type="CTD" id="25948"/>
<dbReference type="DisGeNET" id="25948"/>
<dbReference type="GeneCards" id="KBTBD2"/>
<dbReference type="HGNC" id="HGNC:21751">
    <property type="gene designation" value="KBTBD2"/>
</dbReference>
<dbReference type="HPA" id="ENSG00000170852">
    <property type="expression patterns" value="Low tissue specificity"/>
</dbReference>
<dbReference type="MIM" id="619393">
    <property type="type" value="gene"/>
</dbReference>
<dbReference type="neXtProt" id="NX_Q8IY47"/>
<dbReference type="OpenTargets" id="ENSG00000170852"/>
<dbReference type="PharmGKB" id="PA134892896"/>
<dbReference type="VEuPathDB" id="HostDB:ENSG00000170852"/>
<dbReference type="eggNOG" id="KOG4441">
    <property type="taxonomic scope" value="Eukaryota"/>
</dbReference>
<dbReference type="GeneTree" id="ENSGT00940000156069"/>
<dbReference type="InParanoid" id="Q8IY47"/>
<dbReference type="OMA" id="CEKDEWT"/>
<dbReference type="OrthoDB" id="6359816at2759"/>
<dbReference type="PAN-GO" id="Q8IY47">
    <property type="GO annotations" value="0 GO annotations based on evolutionary models"/>
</dbReference>
<dbReference type="PhylomeDB" id="Q8IY47"/>
<dbReference type="TreeFam" id="TF332672"/>
<dbReference type="PathwayCommons" id="Q8IY47"/>
<dbReference type="SignaLink" id="Q8IY47"/>
<dbReference type="UniPathway" id="UPA00143"/>
<dbReference type="BioGRID-ORCS" id="25948">
    <property type="hits" value="72 hits in 1189 CRISPR screens"/>
</dbReference>
<dbReference type="ChiTaRS" id="KBTBD2">
    <property type="organism name" value="human"/>
</dbReference>
<dbReference type="GenomeRNAi" id="25948"/>
<dbReference type="Pharos" id="Q8IY47">
    <property type="development level" value="Tdark"/>
</dbReference>
<dbReference type="PRO" id="PR:Q8IY47"/>
<dbReference type="Proteomes" id="UP000005640">
    <property type="component" value="Chromosome 7"/>
</dbReference>
<dbReference type="RNAct" id="Q8IY47">
    <property type="molecule type" value="protein"/>
</dbReference>
<dbReference type="Bgee" id="ENSG00000170852">
    <property type="expression patterns" value="Expressed in secondary oocyte and 208 other cell types or tissues"/>
</dbReference>
<dbReference type="ExpressionAtlas" id="Q8IY47">
    <property type="expression patterns" value="baseline and differential"/>
</dbReference>
<dbReference type="GO" id="GO:0031463">
    <property type="term" value="C:Cul3-RING ubiquitin ligase complex"/>
    <property type="evidence" value="ECO:0000318"/>
    <property type="project" value="GO_Central"/>
</dbReference>
<dbReference type="GO" id="GO:0005737">
    <property type="term" value="C:cytoplasm"/>
    <property type="evidence" value="ECO:0000314"/>
    <property type="project" value="UniProt"/>
</dbReference>
<dbReference type="GO" id="GO:1990756">
    <property type="term" value="F:ubiquitin-like ligase-substrate adaptor activity"/>
    <property type="evidence" value="ECO:0000314"/>
    <property type="project" value="UniProt"/>
</dbReference>
<dbReference type="GO" id="GO:0010467">
    <property type="term" value="P:gene expression"/>
    <property type="evidence" value="ECO:0007669"/>
    <property type="project" value="Ensembl"/>
</dbReference>
<dbReference type="GO" id="GO:0006006">
    <property type="term" value="P:glucose metabolic process"/>
    <property type="evidence" value="ECO:0007669"/>
    <property type="project" value="Ensembl"/>
</dbReference>
<dbReference type="GO" id="GO:0006629">
    <property type="term" value="P:lipid metabolic process"/>
    <property type="evidence" value="ECO:0007669"/>
    <property type="project" value="Ensembl"/>
</dbReference>
<dbReference type="GO" id="GO:0043491">
    <property type="term" value="P:phosphatidylinositol 3-kinase/protein kinase B signal transduction"/>
    <property type="evidence" value="ECO:0007669"/>
    <property type="project" value="Ensembl"/>
</dbReference>
<dbReference type="GO" id="GO:0043161">
    <property type="term" value="P:proteasome-mediated ubiquitin-dependent protein catabolic process"/>
    <property type="evidence" value="ECO:0000318"/>
    <property type="project" value="GO_Central"/>
</dbReference>
<dbReference type="GO" id="GO:0070936">
    <property type="term" value="P:protein K48-linked ubiquitination"/>
    <property type="evidence" value="ECO:0000314"/>
    <property type="project" value="UniProt"/>
</dbReference>
<dbReference type="GO" id="GO:1900076">
    <property type="term" value="P:regulation of cellular response to insulin stimulus"/>
    <property type="evidence" value="ECO:0000314"/>
    <property type="project" value="UniProt"/>
</dbReference>
<dbReference type="GO" id="GO:0032868">
    <property type="term" value="P:response to insulin"/>
    <property type="evidence" value="ECO:0007669"/>
    <property type="project" value="Ensembl"/>
</dbReference>
<dbReference type="CDD" id="cd18479">
    <property type="entry name" value="BACK_KBTBD2"/>
    <property type="match status" value="1"/>
</dbReference>
<dbReference type="CDD" id="cd18270">
    <property type="entry name" value="BTB_POZ_KBTBD2_BKLHD1"/>
    <property type="match status" value="1"/>
</dbReference>
<dbReference type="FunFam" id="1.25.40.420:FF:000001">
    <property type="entry name" value="Kelch-like family member 12"/>
    <property type="match status" value="1"/>
</dbReference>
<dbReference type="Gene3D" id="1.25.40.420">
    <property type="match status" value="1"/>
</dbReference>
<dbReference type="Gene3D" id="2.120.10.80">
    <property type="entry name" value="Kelch-type beta propeller"/>
    <property type="match status" value="1"/>
</dbReference>
<dbReference type="Gene3D" id="3.30.710.10">
    <property type="entry name" value="Potassium Channel Kv1.1, Chain A"/>
    <property type="match status" value="1"/>
</dbReference>
<dbReference type="InterPro" id="IPR011705">
    <property type="entry name" value="BACK"/>
</dbReference>
<dbReference type="InterPro" id="IPR017096">
    <property type="entry name" value="BTB-kelch_protein"/>
</dbReference>
<dbReference type="InterPro" id="IPR000210">
    <property type="entry name" value="BTB/POZ_dom"/>
</dbReference>
<dbReference type="InterPro" id="IPR030586">
    <property type="entry name" value="BTB_POZ_KBTBD2"/>
</dbReference>
<dbReference type="InterPro" id="IPR047074">
    <property type="entry name" value="KBTBD2_BACK"/>
</dbReference>
<dbReference type="InterPro" id="IPR015915">
    <property type="entry name" value="Kelch-typ_b-propeller"/>
</dbReference>
<dbReference type="InterPro" id="IPR006652">
    <property type="entry name" value="Kelch_1"/>
</dbReference>
<dbReference type="InterPro" id="IPR011333">
    <property type="entry name" value="SKP1/BTB/POZ_sf"/>
</dbReference>
<dbReference type="PANTHER" id="PTHR45632:SF5">
    <property type="entry name" value="KELCH-LIKE PROTEIN 22"/>
    <property type="match status" value="1"/>
</dbReference>
<dbReference type="PANTHER" id="PTHR45632">
    <property type="entry name" value="LD33804P"/>
    <property type="match status" value="1"/>
</dbReference>
<dbReference type="Pfam" id="PF07707">
    <property type="entry name" value="BACK"/>
    <property type="match status" value="1"/>
</dbReference>
<dbReference type="Pfam" id="PF00651">
    <property type="entry name" value="BTB"/>
    <property type="match status" value="1"/>
</dbReference>
<dbReference type="Pfam" id="PF01344">
    <property type="entry name" value="Kelch_1"/>
    <property type="match status" value="1"/>
</dbReference>
<dbReference type="PIRSF" id="PIRSF037037">
    <property type="entry name" value="Kelch-like_protein_gigaxonin"/>
    <property type="match status" value="1"/>
</dbReference>
<dbReference type="SMART" id="SM00875">
    <property type="entry name" value="BACK"/>
    <property type="match status" value="1"/>
</dbReference>
<dbReference type="SMART" id="SM00225">
    <property type="entry name" value="BTB"/>
    <property type="match status" value="1"/>
</dbReference>
<dbReference type="SMART" id="SM00612">
    <property type="entry name" value="Kelch"/>
    <property type="match status" value="4"/>
</dbReference>
<dbReference type="SUPFAM" id="SSF117281">
    <property type="entry name" value="Kelch motif"/>
    <property type="match status" value="1"/>
</dbReference>
<dbReference type="SUPFAM" id="SSF54695">
    <property type="entry name" value="POZ domain"/>
    <property type="match status" value="1"/>
</dbReference>
<dbReference type="PROSITE" id="PS50097">
    <property type="entry name" value="BTB"/>
    <property type="match status" value="1"/>
</dbReference>
<sequence>MSTQDERQINTEYAVSLLEQLKLFYEQQLFTDIVLIVEGTEFPCHKMVLATCSSYFRAMFMSGLSESKQTHVHLRNVDAATLQIIITYAYTGNLAMNDSTVEQLYETACFLQVEDVLQRCREYLIKKINAENCVRLLSFADLFSCEELKQSAKRMVEHKFTAVYHQDAFMQLSHDLLIDILSSDNLNVEKEETVREAAMLWLEYNTESRSQYLSSVLSQIRIDALSEVTQRAWFQGLPPNDKSVVVQGLYKSMPKFFKPRLGMTKEEMMIFIEASSENPCSLYSSVCYSPQAEKVYKLCSPPADLHKVGTVVTPDNDIYIAGGQVPLKNTKTNHSKTSKLQTAFRTVNCFYWFDAQQNTWFPKTPMLFVRIKPSLVCCEGYIYAIGGDSVGGELNRRTVERYDTEKDEWTMVSPLPCAWQWSAAVVVHDCIYVMTLNLMYCYFPRSDSWVEMAMRQTSRSFASAAAFGDKIFYIGGLHIATNSGIRLPSGTVDGSSVTVEIYDVNKNEWKMAANIPAKRYSDPCVRAVVISNSLCVFMRETHLNERAKYVTYQYDLELDRWSLRQHISERVLWDLGRDFRCTVGKLYPSCLEESPWKPPTYLFSTDGTEEFELDGEMVALPPV</sequence>
<evidence type="ECO:0000250" key="1">
    <source>
        <dbReference type="UniProtKB" id="G3X9X1"/>
    </source>
</evidence>
<evidence type="ECO:0000255" key="2"/>
<evidence type="ECO:0000255" key="3">
    <source>
        <dbReference type="PROSITE-ProRule" id="PRU00037"/>
    </source>
</evidence>
<evidence type="ECO:0000269" key="4">
    <source>
    </source>
</evidence>
<evidence type="ECO:0000269" key="5">
    <source>
    </source>
</evidence>
<evidence type="ECO:0000305" key="6"/>
<evidence type="ECO:0000312" key="7">
    <source>
        <dbReference type="HGNC" id="HGNC:21751"/>
    </source>
</evidence>
<evidence type="ECO:0007744" key="8">
    <source>
    </source>
</evidence>
<name>KBTB2_HUMAN</name>